<gene>
    <name evidence="1" type="primary">trmB</name>
    <name type="ordered locus">Cj1278c</name>
</gene>
<proteinExistence type="inferred from homology"/>
<reference key="1">
    <citation type="journal article" date="2000" name="Nature">
        <title>The genome sequence of the food-borne pathogen Campylobacter jejuni reveals hypervariable sequences.</title>
        <authorList>
            <person name="Parkhill J."/>
            <person name="Wren B.W."/>
            <person name="Mungall K.L."/>
            <person name="Ketley J.M."/>
            <person name="Churcher C.M."/>
            <person name="Basham D."/>
            <person name="Chillingworth T."/>
            <person name="Davies R.M."/>
            <person name="Feltwell T."/>
            <person name="Holroyd S."/>
            <person name="Jagels K."/>
            <person name="Karlyshev A.V."/>
            <person name="Moule S."/>
            <person name="Pallen M.J."/>
            <person name="Penn C.W."/>
            <person name="Quail M.A."/>
            <person name="Rajandream M.A."/>
            <person name="Rutherford K.M."/>
            <person name="van Vliet A.H.M."/>
            <person name="Whitehead S."/>
            <person name="Barrell B.G."/>
        </authorList>
    </citation>
    <scope>NUCLEOTIDE SEQUENCE [LARGE SCALE GENOMIC DNA]</scope>
    <source>
        <strain>ATCC 700819 / NCTC 11168</strain>
    </source>
</reference>
<sequence length="392" mass="46184">MPNFKSKKIKEINLPYSKDDVEFLWLAKNDNVSLIYTKVQEESFFLQIKKAQNGFVIKGDKHTKPSKIGYLQKALKIFKEGFCEDIINEAFGLKNNALIEKTPFIVDNFDELLSRLQGKIYIEIGFGSGRHLLYQAKENPNVLILGVEIYNPALTQVAKLAKAQNVNNILLIQSDARLLLSVLKSKSVEKIFLHFPVPWDKKPHRRVIGKDFCKECARVLVQNGRFELRTDSFEYFNFTLEQFLTFPAPKFSLRKNENLEISSKYEDRWKKQEKNIYDLWVWNFNQECKNYELNEFNLSSVEFSKEDLKKIEQNFKNITIKKDDFFLHFESIYKQDENLLLKVAFGAFNKPEHCYLHLDKTIDFAFKEPFKIQENIKAINELKEILKVQFKI</sequence>
<keyword id="KW-0489">Methyltransferase</keyword>
<keyword id="KW-1185">Reference proteome</keyword>
<keyword id="KW-0949">S-adenosyl-L-methionine</keyword>
<keyword id="KW-0808">Transferase</keyword>
<keyword id="KW-0819">tRNA processing</keyword>
<feature type="chain" id="PRO_0000171312" description="tRNA (guanine-N(7)-)-methyltransferase">
    <location>
        <begin position="1"/>
        <end position="392"/>
    </location>
</feature>
<feature type="binding site" evidence="1">
    <location>
        <position position="123"/>
    </location>
    <ligand>
        <name>S-adenosyl-L-methionine</name>
        <dbReference type="ChEBI" id="CHEBI:59789"/>
    </ligand>
</feature>
<feature type="binding site" evidence="1">
    <location>
        <position position="148"/>
    </location>
    <ligand>
        <name>S-adenosyl-L-methionine</name>
        <dbReference type="ChEBI" id="CHEBI:59789"/>
    </ligand>
</feature>
<feature type="binding site" evidence="1">
    <location>
        <position position="175"/>
    </location>
    <ligand>
        <name>S-adenosyl-L-methionine</name>
        <dbReference type="ChEBI" id="CHEBI:59789"/>
    </ligand>
</feature>
<feature type="binding site" evidence="1">
    <location>
        <position position="201"/>
    </location>
    <ligand>
        <name>substrate</name>
    </ligand>
</feature>
<feature type="binding site" evidence="1">
    <location>
        <position position="231"/>
    </location>
    <ligand>
        <name>substrate</name>
    </ligand>
</feature>
<accession>Q9PN20</accession>
<accession>Q0P8X8</accession>
<organism>
    <name type="scientific">Campylobacter jejuni subsp. jejuni serotype O:2 (strain ATCC 700819 / NCTC 11168)</name>
    <dbReference type="NCBI Taxonomy" id="192222"/>
    <lineage>
        <taxon>Bacteria</taxon>
        <taxon>Pseudomonadati</taxon>
        <taxon>Campylobacterota</taxon>
        <taxon>Epsilonproteobacteria</taxon>
        <taxon>Campylobacterales</taxon>
        <taxon>Campylobacteraceae</taxon>
        <taxon>Campylobacter</taxon>
    </lineage>
</organism>
<protein>
    <recommendedName>
        <fullName evidence="1">tRNA (guanine-N(7)-)-methyltransferase</fullName>
        <ecNumber evidence="1">2.1.1.33</ecNumber>
    </recommendedName>
    <alternativeName>
        <fullName evidence="1">tRNA (guanine(46)-N(7))-methyltransferase</fullName>
    </alternativeName>
    <alternativeName>
        <fullName evidence="1">tRNA(m7G46)-methyltransferase</fullName>
    </alternativeName>
</protein>
<evidence type="ECO:0000255" key="1">
    <source>
        <dbReference type="HAMAP-Rule" id="MF_01057"/>
    </source>
</evidence>
<dbReference type="EC" id="2.1.1.33" evidence="1"/>
<dbReference type="EMBL" id="AL111168">
    <property type="protein sequence ID" value="CAL35393.1"/>
    <property type="molecule type" value="Genomic_DNA"/>
</dbReference>
<dbReference type="PIR" id="H81335">
    <property type="entry name" value="H81335"/>
</dbReference>
<dbReference type="RefSeq" id="WP_002858203.1">
    <property type="nucleotide sequence ID" value="NZ_SZUC01000001.1"/>
</dbReference>
<dbReference type="RefSeq" id="YP_002344669.1">
    <property type="nucleotide sequence ID" value="NC_002163.1"/>
</dbReference>
<dbReference type="SMR" id="Q9PN20"/>
<dbReference type="STRING" id="192222.Cj1278c"/>
<dbReference type="PaxDb" id="192222-Cj1278c"/>
<dbReference type="EnsemblBacteria" id="CAL35393">
    <property type="protein sequence ID" value="CAL35393"/>
    <property type="gene ID" value="Cj1278c"/>
</dbReference>
<dbReference type="GeneID" id="905569"/>
<dbReference type="KEGG" id="cje:Cj1278c"/>
<dbReference type="PATRIC" id="fig|192222.6.peg.1261"/>
<dbReference type="eggNOG" id="COG0220">
    <property type="taxonomic scope" value="Bacteria"/>
</dbReference>
<dbReference type="HOGENOM" id="CLU_041532_0_0_7"/>
<dbReference type="OrthoDB" id="9802090at2"/>
<dbReference type="UniPathway" id="UPA00989"/>
<dbReference type="Proteomes" id="UP000000799">
    <property type="component" value="Chromosome"/>
</dbReference>
<dbReference type="GO" id="GO:0043527">
    <property type="term" value="C:tRNA methyltransferase complex"/>
    <property type="evidence" value="ECO:0007669"/>
    <property type="project" value="TreeGrafter"/>
</dbReference>
<dbReference type="GO" id="GO:0008176">
    <property type="term" value="F:tRNA (guanine(46)-N7)-methyltransferase activity"/>
    <property type="evidence" value="ECO:0007669"/>
    <property type="project" value="UniProtKB-UniRule"/>
</dbReference>
<dbReference type="CDD" id="cd02440">
    <property type="entry name" value="AdoMet_MTases"/>
    <property type="match status" value="1"/>
</dbReference>
<dbReference type="Gene3D" id="3.40.50.150">
    <property type="entry name" value="Vaccinia Virus protein VP39"/>
    <property type="match status" value="1"/>
</dbReference>
<dbReference type="HAMAP" id="MF_01057">
    <property type="entry name" value="tRNA_methyltr_TrmB"/>
    <property type="match status" value="1"/>
</dbReference>
<dbReference type="InterPro" id="IPR029063">
    <property type="entry name" value="SAM-dependent_MTases_sf"/>
</dbReference>
<dbReference type="InterPro" id="IPR003358">
    <property type="entry name" value="tRNA_(Gua-N-7)_MeTrfase_Trmb"/>
</dbReference>
<dbReference type="InterPro" id="IPR055361">
    <property type="entry name" value="tRNA_methyltr_TrmB_bact"/>
</dbReference>
<dbReference type="NCBIfam" id="NF010719">
    <property type="entry name" value="PRK14121.1"/>
    <property type="match status" value="1"/>
</dbReference>
<dbReference type="NCBIfam" id="TIGR00091">
    <property type="entry name" value="tRNA (guanosine(46)-N7)-methyltransferase TrmB"/>
    <property type="match status" value="1"/>
</dbReference>
<dbReference type="PANTHER" id="PTHR23417">
    <property type="entry name" value="3-DEOXY-D-MANNO-OCTULOSONIC-ACID TRANSFERASE/TRNA GUANINE-N 7 - -METHYLTRANSFERASE"/>
    <property type="match status" value="1"/>
</dbReference>
<dbReference type="PANTHER" id="PTHR23417:SF14">
    <property type="entry name" value="PENTACOTRIPEPTIDE-REPEAT REGION OF PRORP DOMAIN-CONTAINING PROTEIN"/>
    <property type="match status" value="1"/>
</dbReference>
<dbReference type="Pfam" id="PF02390">
    <property type="entry name" value="Methyltransf_4"/>
    <property type="match status" value="1"/>
</dbReference>
<dbReference type="SUPFAM" id="SSF53335">
    <property type="entry name" value="S-adenosyl-L-methionine-dependent methyltransferases"/>
    <property type="match status" value="1"/>
</dbReference>
<dbReference type="PROSITE" id="PS51625">
    <property type="entry name" value="SAM_MT_TRMB"/>
    <property type="match status" value="1"/>
</dbReference>
<name>TRMB_CAMJE</name>
<comment type="function">
    <text evidence="1">Catalyzes the formation of N(7)-methylguanine at position 46 (m7G46) in tRNA.</text>
</comment>
<comment type="catalytic activity">
    <reaction evidence="1">
        <text>guanosine(46) in tRNA + S-adenosyl-L-methionine = N(7)-methylguanosine(46) in tRNA + S-adenosyl-L-homocysteine</text>
        <dbReference type="Rhea" id="RHEA:42708"/>
        <dbReference type="Rhea" id="RHEA-COMP:10188"/>
        <dbReference type="Rhea" id="RHEA-COMP:10189"/>
        <dbReference type="ChEBI" id="CHEBI:57856"/>
        <dbReference type="ChEBI" id="CHEBI:59789"/>
        <dbReference type="ChEBI" id="CHEBI:74269"/>
        <dbReference type="ChEBI" id="CHEBI:74480"/>
        <dbReference type="EC" id="2.1.1.33"/>
    </reaction>
</comment>
<comment type="pathway">
    <text evidence="1">tRNA modification; N(7)-methylguanine-tRNA biosynthesis.</text>
</comment>
<comment type="similarity">
    <text evidence="1">Belongs to the class I-like SAM-binding methyltransferase superfamily. TrmB family.</text>
</comment>